<feature type="chain" id="PRO_0000107639" description="Acetate kinase 1">
    <location>
        <begin position="1"/>
        <end position="398"/>
    </location>
</feature>
<feature type="active site" description="Proton donor/acceptor" evidence="1">
    <location>
        <position position="146"/>
    </location>
</feature>
<feature type="binding site" evidence="1">
    <location>
        <position position="9"/>
    </location>
    <ligand>
        <name>Mg(2+)</name>
        <dbReference type="ChEBI" id="CHEBI:18420"/>
    </ligand>
</feature>
<feature type="binding site" evidence="1">
    <location>
        <position position="16"/>
    </location>
    <ligand>
        <name>ATP</name>
        <dbReference type="ChEBI" id="CHEBI:30616"/>
    </ligand>
</feature>
<feature type="binding site" evidence="1">
    <location>
        <position position="89"/>
    </location>
    <ligand>
        <name>substrate</name>
    </ligand>
</feature>
<feature type="binding site" evidence="1">
    <location>
        <begin position="206"/>
        <end position="210"/>
    </location>
    <ligand>
        <name>ATP</name>
        <dbReference type="ChEBI" id="CHEBI:30616"/>
    </ligand>
</feature>
<feature type="binding site" evidence="1">
    <location>
        <begin position="281"/>
        <end position="283"/>
    </location>
    <ligand>
        <name>ATP</name>
        <dbReference type="ChEBI" id="CHEBI:30616"/>
    </ligand>
</feature>
<feature type="binding site" evidence="1">
    <location>
        <begin position="329"/>
        <end position="333"/>
    </location>
    <ligand>
        <name>ATP</name>
        <dbReference type="ChEBI" id="CHEBI:30616"/>
    </ligand>
</feature>
<feature type="binding site" evidence="1">
    <location>
        <position position="384"/>
    </location>
    <ligand>
        <name>Mg(2+)</name>
        <dbReference type="ChEBI" id="CHEBI:18420"/>
    </ligand>
</feature>
<feature type="site" description="Transition state stabilizer" evidence="1">
    <location>
        <position position="178"/>
    </location>
</feature>
<feature type="site" description="Transition state stabilizer" evidence="1">
    <location>
        <position position="239"/>
    </location>
</feature>
<protein>
    <recommendedName>
        <fullName evidence="1">Acetate kinase 1</fullName>
        <ecNumber evidence="1">2.7.2.1</ecNumber>
    </recommendedName>
    <alternativeName>
        <fullName evidence="1">Acetokinase 1</fullName>
    </alternativeName>
</protein>
<accession>Q87MZ4</accession>
<proteinExistence type="inferred from homology"/>
<sequence>MSKLVLVLNCGSSSLKFAVVDAENGEEHLSGLAECLHLPEARIKWKLDGKHEAQLGNGAAHEEALAFMVETILASKPELSENLAAIGHRVVHGGEQFTQSALITDDVLKGIEDCATLAPLHNPAHIIGIKAAQKSFPALKNVAVFDTAFHQTMPEESYLYALPYNLYKEHGIRRYGMHGTSHLFITREVAGLLNKPVEEVNIINCHLGNGASVCAVKNGQSVDTSMGLTPLEGLVMGTRCGDIDPAIIFHLHDTLGYSVEKINTMLTKESGLQGLTEVTSDCRFVEDNYGEKEEATRAMDVFCHRLAKYVAGYTATLDGRLDAITFTGGIGENSAPIREMVLNRLGIFGIEVDSEANLKARFGGEGVITTENSRIPAMVISTNEELVIAEDTARLAGL</sequence>
<organism>
    <name type="scientific">Vibrio parahaemolyticus serotype O3:K6 (strain RIMD 2210633)</name>
    <dbReference type="NCBI Taxonomy" id="223926"/>
    <lineage>
        <taxon>Bacteria</taxon>
        <taxon>Pseudomonadati</taxon>
        <taxon>Pseudomonadota</taxon>
        <taxon>Gammaproteobacteria</taxon>
        <taxon>Vibrionales</taxon>
        <taxon>Vibrionaceae</taxon>
        <taxon>Vibrio</taxon>
    </lineage>
</organism>
<evidence type="ECO:0000255" key="1">
    <source>
        <dbReference type="HAMAP-Rule" id="MF_00020"/>
    </source>
</evidence>
<name>ACKA1_VIBPA</name>
<dbReference type="EC" id="2.7.2.1" evidence="1"/>
<dbReference type="EMBL" id="BA000031">
    <property type="protein sequence ID" value="BAC60345.1"/>
    <property type="molecule type" value="Genomic_DNA"/>
</dbReference>
<dbReference type="RefSeq" id="NP_798461.1">
    <property type="nucleotide sequence ID" value="NC_004603.1"/>
</dbReference>
<dbReference type="RefSeq" id="WP_005461478.1">
    <property type="nucleotide sequence ID" value="NC_004603.1"/>
</dbReference>
<dbReference type="SMR" id="Q87MZ4"/>
<dbReference type="GeneID" id="1189593"/>
<dbReference type="KEGG" id="vpa:VP2082"/>
<dbReference type="PATRIC" id="fig|223926.6.peg.1993"/>
<dbReference type="eggNOG" id="COG0282">
    <property type="taxonomic scope" value="Bacteria"/>
</dbReference>
<dbReference type="HOGENOM" id="CLU_020352_0_1_6"/>
<dbReference type="UniPathway" id="UPA00340">
    <property type="reaction ID" value="UER00458"/>
</dbReference>
<dbReference type="Proteomes" id="UP000002493">
    <property type="component" value="Chromosome 1"/>
</dbReference>
<dbReference type="GO" id="GO:0005829">
    <property type="term" value="C:cytosol"/>
    <property type="evidence" value="ECO:0007669"/>
    <property type="project" value="TreeGrafter"/>
</dbReference>
<dbReference type="GO" id="GO:0008776">
    <property type="term" value="F:acetate kinase activity"/>
    <property type="evidence" value="ECO:0007669"/>
    <property type="project" value="UniProtKB-UniRule"/>
</dbReference>
<dbReference type="GO" id="GO:0005524">
    <property type="term" value="F:ATP binding"/>
    <property type="evidence" value="ECO:0007669"/>
    <property type="project" value="UniProtKB-KW"/>
</dbReference>
<dbReference type="GO" id="GO:0000287">
    <property type="term" value="F:magnesium ion binding"/>
    <property type="evidence" value="ECO:0007669"/>
    <property type="project" value="UniProtKB-UniRule"/>
</dbReference>
<dbReference type="GO" id="GO:0006083">
    <property type="term" value="P:acetate metabolic process"/>
    <property type="evidence" value="ECO:0007669"/>
    <property type="project" value="TreeGrafter"/>
</dbReference>
<dbReference type="GO" id="GO:0006085">
    <property type="term" value="P:acetyl-CoA biosynthetic process"/>
    <property type="evidence" value="ECO:0007669"/>
    <property type="project" value="UniProtKB-UniRule"/>
</dbReference>
<dbReference type="CDD" id="cd24010">
    <property type="entry name" value="ASKHA_NBD_AcK_PK"/>
    <property type="match status" value="1"/>
</dbReference>
<dbReference type="FunFam" id="3.30.420.40:FF:000041">
    <property type="entry name" value="Acetate kinase"/>
    <property type="match status" value="1"/>
</dbReference>
<dbReference type="FunFam" id="3.30.420.40:FF:000042">
    <property type="entry name" value="Acetate kinase"/>
    <property type="match status" value="1"/>
</dbReference>
<dbReference type="Gene3D" id="3.30.420.40">
    <property type="match status" value="2"/>
</dbReference>
<dbReference type="HAMAP" id="MF_00020">
    <property type="entry name" value="Acetate_kinase"/>
    <property type="match status" value="1"/>
</dbReference>
<dbReference type="InterPro" id="IPR004372">
    <property type="entry name" value="Ac/propionate_kinase"/>
</dbReference>
<dbReference type="InterPro" id="IPR000890">
    <property type="entry name" value="Aliphatic_acid_kin_short-chain"/>
</dbReference>
<dbReference type="InterPro" id="IPR023865">
    <property type="entry name" value="Aliphatic_acid_kinase_CS"/>
</dbReference>
<dbReference type="InterPro" id="IPR043129">
    <property type="entry name" value="ATPase_NBD"/>
</dbReference>
<dbReference type="NCBIfam" id="TIGR00016">
    <property type="entry name" value="ackA"/>
    <property type="match status" value="1"/>
</dbReference>
<dbReference type="PANTHER" id="PTHR21060">
    <property type="entry name" value="ACETATE KINASE"/>
    <property type="match status" value="1"/>
</dbReference>
<dbReference type="PANTHER" id="PTHR21060:SF21">
    <property type="entry name" value="ACETATE KINASE"/>
    <property type="match status" value="1"/>
</dbReference>
<dbReference type="Pfam" id="PF00871">
    <property type="entry name" value="Acetate_kinase"/>
    <property type="match status" value="1"/>
</dbReference>
<dbReference type="PIRSF" id="PIRSF000722">
    <property type="entry name" value="Acetate_prop_kin"/>
    <property type="match status" value="1"/>
</dbReference>
<dbReference type="PRINTS" id="PR00471">
    <property type="entry name" value="ACETATEKNASE"/>
</dbReference>
<dbReference type="SUPFAM" id="SSF53067">
    <property type="entry name" value="Actin-like ATPase domain"/>
    <property type="match status" value="2"/>
</dbReference>
<dbReference type="PROSITE" id="PS01075">
    <property type="entry name" value="ACETATE_KINASE_1"/>
    <property type="match status" value="1"/>
</dbReference>
<dbReference type="PROSITE" id="PS01076">
    <property type="entry name" value="ACETATE_KINASE_2"/>
    <property type="match status" value="1"/>
</dbReference>
<comment type="function">
    <text evidence="1">Catalyzes the formation of acetyl phosphate from acetate and ATP. Can also catalyze the reverse reaction.</text>
</comment>
<comment type="catalytic activity">
    <reaction evidence="1">
        <text>acetate + ATP = acetyl phosphate + ADP</text>
        <dbReference type="Rhea" id="RHEA:11352"/>
        <dbReference type="ChEBI" id="CHEBI:22191"/>
        <dbReference type="ChEBI" id="CHEBI:30089"/>
        <dbReference type="ChEBI" id="CHEBI:30616"/>
        <dbReference type="ChEBI" id="CHEBI:456216"/>
        <dbReference type="EC" id="2.7.2.1"/>
    </reaction>
</comment>
<comment type="cofactor">
    <cofactor evidence="1">
        <name>Mg(2+)</name>
        <dbReference type="ChEBI" id="CHEBI:18420"/>
    </cofactor>
    <cofactor evidence="1">
        <name>Mn(2+)</name>
        <dbReference type="ChEBI" id="CHEBI:29035"/>
    </cofactor>
    <text evidence="1">Mg(2+). Can also accept Mn(2+).</text>
</comment>
<comment type="pathway">
    <text evidence="1">Metabolic intermediate biosynthesis; acetyl-CoA biosynthesis; acetyl-CoA from acetate: step 1/2.</text>
</comment>
<comment type="subunit">
    <text evidence="1">Homodimer.</text>
</comment>
<comment type="subcellular location">
    <subcellularLocation>
        <location evidence="1">Cytoplasm</location>
    </subcellularLocation>
</comment>
<comment type="similarity">
    <text evidence="1">Belongs to the acetokinase family.</text>
</comment>
<keyword id="KW-0067">ATP-binding</keyword>
<keyword id="KW-0963">Cytoplasm</keyword>
<keyword id="KW-0418">Kinase</keyword>
<keyword id="KW-0460">Magnesium</keyword>
<keyword id="KW-0479">Metal-binding</keyword>
<keyword id="KW-0547">Nucleotide-binding</keyword>
<keyword id="KW-0808">Transferase</keyword>
<gene>
    <name evidence="1" type="primary">ackA1</name>
    <name type="ordered locus">VP2082</name>
</gene>
<reference key="1">
    <citation type="journal article" date="2003" name="Lancet">
        <title>Genome sequence of Vibrio parahaemolyticus: a pathogenic mechanism distinct from that of V. cholerae.</title>
        <authorList>
            <person name="Makino K."/>
            <person name="Oshima K."/>
            <person name="Kurokawa K."/>
            <person name="Yokoyama K."/>
            <person name="Uda T."/>
            <person name="Tagomori K."/>
            <person name="Iijima Y."/>
            <person name="Najima M."/>
            <person name="Nakano M."/>
            <person name="Yamashita A."/>
            <person name="Kubota Y."/>
            <person name="Kimura S."/>
            <person name="Yasunaga T."/>
            <person name="Honda T."/>
            <person name="Shinagawa H."/>
            <person name="Hattori M."/>
            <person name="Iida T."/>
        </authorList>
    </citation>
    <scope>NUCLEOTIDE SEQUENCE [LARGE SCALE GENOMIC DNA]</scope>
    <source>
        <strain>RIMD 2210633</strain>
    </source>
</reference>